<accession>Q54LF2</accession>
<reference key="1">
    <citation type="journal article" date="2005" name="Nature">
        <title>The genome of the social amoeba Dictyostelium discoideum.</title>
        <authorList>
            <person name="Eichinger L."/>
            <person name="Pachebat J.A."/>
            <person name="Gloeckner G."/>
            <person name="Rajandream M.A."/>
            <person name="Sucgang R."/>
            <person name="Berriman M."/>
            <person name="Song J."/>
            <person name="Olsen R."/>
            <person name="Szafranski K."/>
            <person name="Xu Q."/>
            <person name="Tunggal B."/>
            <person name="Kummerfeld S."/>
            <person name="Madera M."/>
            <person name="Konfortov B.A."/>
            <person name="Rivero F."/>
            <person name="Bankier A.T."/>
            <person name="Lehmann R."/>
            <person name="Hamlin N."/>
            <person name="Davies R."/>
            <person name="Gaudet P."/>
            <person name="Fey P."/>
            <person name="Pilcher K."/>
            <person name="Chen G."/>
            <person name="Saunders D."/>
            <person name="Sodergren E.J."/>
            <person name="Davis P."/>
            <person name="Kerhornou A."/>
            <person name="Nie X."/>
            <person name="Hall N."/>
            <person name="Anjard C."/>
            <person name="Hemphill L."/>
            <person name="Bason N."/>
            <person name="Farbrother P."/>
            <person name="Desany B."/>
            <person name="Just E."/>
            <person name="Morio T."/>
            <person name="Rost R."/>
            <person name="Churcher C.M."/>
            <person name="Cooper J."/>
            <person name="Haydock S."/>
            <person name="van Driessche N."/>
            <person name="Cronin A."/>
            <person name="Goodhead I."/>
            <person name="Muzny D.M."/>
            <person name="Mourier T."/>
            <person name="Pain A."/>
            <person name="Lu M."/>
            <person name="Harper D."/>
            <person name="Lindsay R."/>
            <person name="Hauser H."/>
            <person name="James K.D."/>
            <person name="Quiles M."/>
            <person name="Madan Babu M."/>
            <person name="Saito T."/>
            <person name="Buchrieser C."/>
            <person name="Wardroper A."/>
            <person name="Felder M."/>
            <person name="Thangavelu M."/>
            <person name="Johnson D."/>
            <person name="Knights A."/>
            <person name="Loulseged H."/>
            <person name="Mungall K.L."/>
            <person name="Oliver K."/>
            <person name="Price C."/>
            <person name="Quail M.A."/>
            <person name="Urushihara H."/>
            <person name="Hernandez J."/>
            <person name="Rabbinowitsch E."/>
            <person name="Steffen D."/>
            <person name="Sanders M."/>
            <person name="Ma J."/>
            <person name="Kohara Y."/>
            <person name="Sharp S."/>
            <person name="Simmonds M.N."/>
            <person name="Spiegler S."/>
            <person name="Tivey A."/>
            <person name="Sugano S."/>
            <person name="White B."/>
            <person name="Walker D."/>
            <person name="Woodward J.R."/>
            <person name="Winckler T."/>
            <person name="Tanaka Y."/>
            <person name="Shaulsky G."/>
            <person name="Schleicher M."/>
            <person name="Weinstock G.M."/>
            <person name="Rosenthal A."/>
            <person name="Cox E.C."/>
            <person name="Chisholm R.L."/>
            <person name="Gibbs R.A."/>
            <person name="Loomis W.F."/>
            <person name="Platzer M."/>
            <person name="Kay R.R."/>
            <person name="Williams J.G."/>
            <person name="Dear P.H."/>
            <person name="Noegel A.A."/>
            <person name="Barrell B.G."/>
            <person name="Kuspa A."/>
        </authorList>
    </citation>
    <scope>NUCLEOTIDE SEQUENCE [LARGE SCALE GENOMIC DNA]</scope>
    <source>
        <strain>AX4</strain>
    </source>
</reference>
<dbReference type="EMBL" id="AAFI02000089">
    <property type="protein sequence ID" value="EAL64089.1"/>
    <property type="molecule type" value="Genomic_DNA"/>
</dbReference>
<dbReference type="RefSeq" id="XP_637609.1">
    <property type="nucleotide sequence ID" value="XM_632517.1"/>
</dbReference>
<dbReference type="FunCoup" id="Q54LF2">
    <property type="interactions" value="244"/>
</dbReference>
<dbReference type="PaxDb" id="44689-DDB0252802"/>
<dbReference type="EnsemblProtists" id="EAL64089">
    <property type="protein sequence ID" value="EAL64089"/>
    <property type="gene ID" value="DDB_G0286667"/>
</dbReference>
<dbReference type="GeneID" id="8625749"/>
<dbReference type="KEGG" id="ddi:DDB_G0286667"/>
<dbReference type="dictyBase" id="DDB_G0286667"/>
<dbReference type="HOGENOM" id="CLU_181850_1_0_1"/>
<dbReference type="InParanoid" id="Q54LF2"/>
<dbReference type="PRO" id="PR:Q54LF2"/>
<dbReference type="Proteomes" id="UP000002195">
    <property type="component" value="Chromosome 4"/>
</dbReference>
<dbReference type="GO" id="GO:0030587">
    <property type="term" value="P:sorocarp development"/>
    <property type="evidence" value="ECO:0000318"/>
    <property type="project" value="GO_Central"/>
</dbReference>
<dbReference type="InterPro" id="IPR050533">
    <property type="entry name" value="HssA/B-like_chaperone"/>
</dbReference>
<dbReference type="InterPro" id="IPR008455">
    <property type="entry name" value="HssA/B-related"/>
</dbReference>
<dbReference type="PANTHER" id="PTHR31059">
    <property type="entry name" value="HSSA/B-LIKE PROTEIN 1-RELATED-RELATED"/>
    <property type="match status" value="1"/>
</dbReference>
<dbReference type="PANTHER" id="PTHR31059:SF5">
    <property type="entry name" value="HSSA_B-LIKE PROTEIN 1-RELATED"/>
    <property type="match status" value="1"/>
</dbReference>
<dbReference type="Pfam" id="PF05710">
    <property type="entry name" value="Coiled"/>
    <property type="match status" value="1"/>
</dbReference>
<keyword id="KW-1185">Reference proteome</keyword>
<feature type="chain" id="PRO_0000330429" description="HssA/B-like protein 61">
    <location>
        <begin position="1"/>
        <end position="88"/>
    </location>
</feature>
<name>HSL61_DICDI</name>
<proteinExistence type="inferred from homology"/>
<organism>
    <name type="scientific">Dictyostelium discoideum</name>
    <name type="common">Social amoeba</name>
    <dbReference type="NCBI Taxonomy" id="44689"/>
    <lineage>
        <taxon>Eukaryota</taxon>
        <taxon>Amoebozoa</taxon>
        <taxon>Evosea</taxon>
        <taxon>Eumycetozoa</taxon>
        <taxon>Dictyostelia</taxon>
        <taxon>Dictyosteliales</taxon>
        <taxon>Dictyosteliaceae</taxon>
        <taxon>Dictyostelium</taxon>
    </lineage>
</organism>
<comment type="similarity">
    <text evidence="1">Belongs to the hssA/B family.</text>
</comment>
<sequence>MTILSAITSISRPNKISKSVVSSNGGASLSLSSNSVACITACGGSSYSYSSSYQSSGSGFSYNSSYSSSVGYSSSVGIATGSCHSLCH</sequence>
<protein>
    <recommendedName>
        <fullName>HssA/B-like protein 61</fullName>
    </recommendedName>
</protein>
<gene>
    <name type="primary">hssl61</name>
    <name type="ORF">DDB_G0286667</name>
</gene>
<evidence type="ECO:0000305" key="1"/>